<accession>Q0KHQ5</accession>
<accession>Q8T093</accession>
<sequence>MPSARPGSLKDPEIADLFNKHDPEKIFEDLREIGHGSFGAVYYARCNLTREIVAIKKMSYTGKQSQEKWQDILKEIRFLRQLNHPNTIEYKGCYLRESTAWLVMEYCVGSASDIIEVHKKPLHEDEIAAICLGVLSGLSYLHSLGRIHRDIKAGNILLTDNGVVKLADFGSAAIKCPANSFVGTPYWMAPEVILAMDEGQYDGKVDVWSLGITCIELAERKPPYFNMNAMSALYHIAQNESPTLPKNDWSDAFCSFVELCLKKMPAERPSSAKLLTHAYVTRPRSDTVLLELIARTKSAVRELDNLNYRKMKKILMVDTCETESAVGDTDDQQDDHAGGDSSKSNSITSEHSIHSVGVSAASSQSSSSNSIPAAAQNHHHIAAHHHQQAASAAVAAAMHHHHHPHQQPPPSWPSGQQGQPVPPGAVSRNSSRHRNRPPLPNIMHSMNNNVTPTNSASVVPAPAPAPVLPPPISVLPHLSAMGHVGGGGTGTGGSGGGSPASGGPLADRIQPVQPRYLTTPAAQAAVYAASSASSQQAISNAVNDHGPNNFATIRTTSIVTKQQKEHMQEEMHEQMSGYKRMRREHQAHLVKLEEKCKVDMEAHKTALDKEYDTLLHNFTRDLDRLETKHQQDVERRAKQTSAAEKKLHKEITLKQENDRKVYDLNRKKEYKANKERWKRELSMDESTPKRQRDLTLQSQKDNLKQHEAQEEQRMLQAQKQYIELEMRKFKRKRMIMQHEHEDQQLRDELGKKEQQLQQAHAMLLKHHEKTQELEYRQQKSVHQLREEQINKQHDTELHNQKDYMDRIKKELVRKHAVELRQQPKSLKQKELQIRKQFRETCKTQTKQYKRYKAQVLQTTPKEQQKEVIKQLKEEKHRKLTLLGEQYEQSIADMFQSQSYKLDESQVIECQRTHEQLEYELEMLTAYQNKNKKQAQEQRDRERRELENRVSVRRGLLENKMDAELQQFNQERAERLRMKHEKHTKELEAFDNESIALGFSTLSLIEVSREAYADEEGSLSGSMISLAHSNSSTSFPAGSL</sequence>
<organism evidence="21">
    <name type="scientific">Drosophila melanogaster</name>
    <name type="common">Fruit fly</name>
    <dbReference type="NCBI Taxonomy" id="7227"/>
    <lineage>
        <taxon>Eukaryota</taxon>
        <taxon>Metazoa</taxon>
        <taxon>Ecdysozoa</taxon>
        <taxon>Arthropoda</taxon>
        <taxon>Hexapoda</taxon>
        <taxon>Insecta</taxon>
        <taxon>Pterygota</taxon>
        <taxon>Neoptera</taxon>
        <taxon>Endopterygota</taxon>
        <taxon>Diptera</taxon>
        <taxon>Brachycera</taxon>
        <taxon>Muscomorpha</taxon>
        <taxon>Ephydroidea</taxon>
        <taxon>Drosophilidae</taxon>
        <taxon>Drosophila</taxon>
        <taxon>Sophophora</taxon>
    </lineage>
</organism>
<reference evidence="18 19" key="1">
    <citation type="journal article" date="2007" name="Proc. Natl. Acad. Sci. U.S.A.">
        <title>Maternal Nanos represses hid/skl-dependent apoptosis to maintain the germ line in Drosophila embryos.</title>
        <authorList>
            <person name="Sato K."/>
            <person name="Hayashi Y."/>
            <person name="Ninomiya Y."/>
            <person name="Shigenobu S."/>
            <person name="Arita K."/>
            <person name="Mukai M."/>
            <person name="Kobayashi S."/>
        </authorList>
    </citation>
    <scope>NUCLEOTIDE SEQUENCE [MRNA] (ISOFORMS A AND D)</scope>
    <scope>FUNCTION</scope>
</reference>
<reference evidence="21" key="2">
    <citation type="journal article" date="2000" name="Science">
        <title>The genome sequence of Drosophila melanogaster.</title>
        <authorList>
            <person name="Adams M.D."/>
            <person name="Celniker S.E."/>
            <person name="Holt R.A."/>
            <person name="Evans C.A."/>
            <person name="Gocayne J.D."/>
            <person name="Amanatides P.G."/>
            <person name="Scherer S.E."/>
            <person name="Li P.W."/>
            <person name="Hoskins R.A."/>
            <person name="Galle R.F."/>
            <person name="George R.A."/>
            <person name="Lewis S.E."/>
            <person name="Richards S."/>
            <person name="Ashburner M."/>
            <person name="Henderson S.N."/>
            <person name="Sutton G.G."/>
            <person name="Wortman J.R."/>
            <person name="Yandell M.D."/>
            <person name="Zhang Q."/>
            <person name="Chen L.X."/>
            <person name="Brandon R.C."/>
            <person name="Rogers Y.-H.C."/>
            <person name="Blazej R.G."/>
            <person name="Champe M."/>
            <person name="Pfeiffer B.D."/>
            <person name="Wan K.H."/>
            <person name="Doyle C."/>
            <person name="Baxter E.G."/>
            <person name="Helt G."/>
            <person name="Nelson C.R."/>
            <person name="Miklos G.L.G."/>
            <person name="Abril J.F."/>
            <person name="Agbayani A."/>
            <person name="An H.-J."/>
            <person name="Andrews-Pfannkoch C."/>
            <person name="Baldwin D."/>
            <person name="Ballew R.M."/>
            <person name="Basu A."/>
            <person name="Baxendale J."/>
            <person name="Bayraktaroglu L."/>
            <person name="Beasley E.M."/>
            <person name="Beeson K.Y."/>
            <person name="Benos P.V."/>
            <person name="Berman B.P."/>
            <person name="Bhandari D."/>
            <person name="Bolshakov S."/>
            <person name="Borkova D."/>
            <person name="Botchan M.R."/>
            <person name="Bouck J."/>
            <person name="Brokstein P."/>
            <person name="Brottier P."/>
            <person name="Burtis K.C."/>
            <person name="Busam D.A."/>
            <person name="Butler H."/>
            <person name="Cadieu E."/>
            <person name="Center A."/>
            <person name="Chandra I."/>
            <person name="Cherry J.M."/>
            <person name="Cawley S."/>
            <person name="Dahlke C."/>
            <person name="Davenport L.B."/>
            <person name="Davies P."/>
            <person name="de Pablos B."/>
            <person name="Delcher A."/>
            <person name="Deng Z."/>
            <person name="Mays A.D."/>
            <person name="Dew I."/>
            <person name="Dietz S.M."/>
            <person name="Dodson K."/>
            <person name="Doup L.E."/>
            <person name="Downes M."/>
            <person name="Dugan-Rocha S."/>
            <person name="Dunkov B.C."/>
            <person name="Dunn P."/>
            <person name="Durbin K.J."/>
            <person name="Evangelista C.C."/>
            <person name="Ferraz C."/>
            <person name="Ferriera S."/>
            <person name="Fleischmann W."/>
            <person name="Fosler C."/>
            <person name="Gabrielian A.E."/>
            <person name="Garg N.S."/>
            <person name="Gelbart W.M."/>
            <person name="Glasser K."/>
            <person name="Glodek A."/>
            <person name="Gong F."/>
            <person name="Gorrell J.H."/>
            <person name="Gu Z."/>
            <person name="Guan P."/>
            <person name="Harris M."/>
            <person name="Harris N.L."/>
            <person name="Harvey D.A."/>
            <person name="Heiman T.J."/>
            <person name="Hernandez J.R."/>
            <person name="Houck J."/>
            <person name="Hostin D."/>
            <person name="Houston K.A."/>
            <person name="Howland T.J."/>
            <person name="Wei M.-H."/>
            <person name="Ibegwam C."/>
            <person name="Jalali M."/>
            <person name="Kalush F."/>
            <person name="Karpen G.H."/>
            <person name="Ke Z."/>
            <person name="Kennison J.A."/>
            <person name="Ketchum K.A."/>
            <person name="Kimmel B.E."/>
            <person name="Kodira C.D."/>
            <person name="Kraft C.L."/>
            <person name="Kravitz S."/>
            <person name="Kulp D."/>
            <person name="Lai Z."/>
            <person name="Lasko P."/>
            <person name="Lei Y."/>
            <person name="Levitsky A.A."/>
            <person name="Li J.H."/>
            <person name="Li Z."/>
            <person name="Liang Y."/>
            <person name="Lin X."/>
            <person name="Liu X."/>
            <person name="Mattei B."/>
            <person name="McIntosh T.C."/>
            <person name="McLeod M.P."/>
            <person name="McPherson D."/>
            <person name="Merkulov G."/>
            <person name="Milshina N.V."/>
            <person name="Mobarry C."/>
            <person name="Morris J."/>
            <person name="Moshrefi A."/>
            <person name="Mount S.M."/>
            <person name="Moy M."/>
            <person name="Murphy B."/>
            <person name="Murphy L."/>
            <person name="Muzny D.M."/>
            <person name="Nelson D.L."/>
            <person name="Nelson D.R."/>
            <person name="Nelson K.A."/>
            <person name="Nixon K."/>
            <person name="Nusskern D.R."/>
            <person name="Pacleb J.M."/>
            <person name="Palazzolo M."/>
            <person name="Pittman G.S."/>
            <person name="Pan S."/>
            <person name="Pollard J."/>
            <person name="Puri V."/>
            <person name="Reese M.G."/>
            <person name="Reinert K."/>
            <person name="Remington K."/>
            <person name="Saunders R.D.C."/>
            <person name="Scheeler F."/>
            <person name="Shen H."/>
            <person name="Shue B.C."/>
            <person name="Siden-Kiamos I."/>
            <person name="Simpson M."/>
            <person name="Skupski M.P."/>
            <person name="Smith T.J."/>
            <person name="Spier E."/>
            <person name="Spradling A.C."/>
            <person name="Stapleton M."/>
            <person name="Strong R."/>
            <person name="Sun E."/>
            <person name="Svirskas R."/>
            <person name="Tector C."/>
            <person name="Turner R."/>
            <person name="Venter E."/>
            <person name="Wang A.H."/>
            <person name="Wang X."/>
            <person name="Wang Z.-Y."/>
            <person name="Wassarman D.A."/>
            <person name="Weinstock G.M."/>
            <person name="Weissenbach J."/>
            <person name="Williams S.M."/>
            <person name="Woodage T."/>
            <person name="Worley K.C."/>
            <person name="Wu D."/>
            <person name="Yang S."/>
            <person name="Yao Q.A."/>
            <person name="Ye J."/>
            <person name="Yeh R.-F."/>
            <person name="Zaveri J.S."/>
            <person name="Zhan M."/>
            <person name="Zhang G."/>
            <person name="Zhao Q."/>
            <person name="Zheng L."/>
            <person name="Zheng X.H."/>
            <person name="Zhong F.N."/>
            <person name="Zhong W."/>
            <person name="Zhou X."/>
            <person name="Zhu S.C."/>
            <person name="Zhu X."/>
            <person name="Smith H.O."/>
            <person name="Gibbs R.A."/>
            <person name="Myers E.W."/>
            <person name="Rubin G.M."/>
            <person name="Venter J.C."/>
        </authorList>
    </citation>
    <scope>NUCLEOTIDE SEQUENCE [LARGE SCALE GENOMIC DNA]</scope>
    <source>
        <strain evidence="21">Berkeley</strain>
    </source>
</reference>
<reference evidence="21" key="3">
    <citation type="journal article" date="2002" name="Genome Biol.">
        <title>Annotation of the Drosophila melanogaster euchromatic genome: a systematic review.</title>
        <authorList>
            <person name="Misra S."/>
            <person name="Crosby M.A."/>
            <person name="Mungall C.J."/>
            <person name="Matthews B.B."/>
            <person name="Campbell K.S."/>
            <person name="Hradecky P."/>
            <person name="Huang Y."/>
            <person name="Kaminker J.S."/>
            <person name="Millburn G.H."/>
            <person name="Prochnik S.E."/>
            <person name="Smith C.D."/>
            <person name="Tupy J.L."/>
            <person name="Whitfield E.J."/>
            <person name="Bayraktaroglu L."/>
            <person name="Berman B.P."/>
            <person name="Bettencourt B.R."/>
            <person name="Celniker S.E."/>
            <person name="de Grey A.D.N.J."/>
            <person name="Drysdale R.A."/>
            <person name="Harris N.L."/>
            <person name="Richter J."/>
            <person name="Russo S."/>
            <person name="Schroeder A.J."/>
            <person name="Shu S.Q."/>
            <person name="Stapleton M."/>
            <person name="Yamada C."/>
            <person name="Ashburner M."/>
            <person name="Gelbart W.M."/>
            <person name="Rubin G.M."/>
            <person name="Lewis S.E."/>
        </authorList>
    </citation>
    <scope>GENOME REANNOTATION</scope>
    <source>
        <strain evidence="21">Berkeley</strain>
    </source>
</reference>
<reference evidence="16" key="4">
    <citation type="journal article" date="2002" name="Genome Biol.">
        <title>A Drosophila full-length cDNA resource.</title>
        <authorList>
            <person name="Stapleton M."/>
            <person name="Carlson J.W."/>
            <person name="Brokstein P."/>
            <person name="Yu C."/>
            <person name="Champe M."/>
            <person name="George R.A."/>
            <person name="Guarin H."/>
            <person name="Kronmiller B."/>
            <person name="Pacleb J.M."/>
            <person name="Park S."/>
            <person name="Wan K.H."/>
            <person name="Rubin G.M."/>
            <person name="Celniker S.E."/>
        </authorList>
    </citation>
    <scope>NUCLEOTIDE SEQUENCE [LARGE SCALE MRNA] (ISOFORM A)</scope>
    <source>
        <strain evidence="16">Berkeley</strain>
        <tissue evidence="16">Embryo</tissue>
    </source>
</reference>
<reference evidence="17" key="5">
    <citation type="submission" date="2009-09" db="EMBL/GenBank/DDBJ databases">
        <authorList>
            <person name="Carlson J."/>
            <person name="Booth B."/>
            <person name="Frise E."/>
            <person name="Park S."/>
            <person name="Wan K."/>
            <person name="Yu C."/>
            <person name="Celniker S."/>
        </authorList>
    </citation>
    <scope>NUCLEOTIDE SEQUENCE [LARGE SCALE MRNA] (ISOFORM D)</scope>
    <source>
        <strain evidence="17">Berkeley</strain>
        <tissue evidence="17">Embryo</tissue>
    </source>
</reference>
<reference evidence="15" key="6">
    <citation type="journal article" date="2010" name="J. Cell Sci.">
        <title>Tao-1 is a negative regulator of microtubule plus-end growth.</title>
        <authorList>
            <person name="Liu T."/>
            <person name="Rohn J.L."/>
            <person name="Picone R."/>
            <person name="Kunda P."/>
            <person name="Baum B."/>
        </authorList>
    </citation>
    <scope>FUNCTION</scope>
    <scope>SUBCELLULAR LOCATION</scope>
    <scope>MUTAGENESIS OF LYS-56</scope>
</reference>
<reference evidence="15" key="7">
    <citation type="journal article" date="2011" name="Dev. Cell">
        <title>Tao-1 phosphorylates Hippo/MST kinases to regulate the Hippo-Salvador-Warts tumor suppressor pathway.</title>
        <authorList>
            <person name="Boggiano J.C."/>
            <person name="Vanderzalm P.J."/>
            <person name="Fehon R.G."/>
        </authorList>
    </citation>
    <scope>FUNCTION</scope>
    <scope>CATALYTIC ACTIVITY</scope>
    <scope>COFACTOR</scope>
    <scope>AUTOPHOSPHORYLATION</scope>
    <scope>DISRUPTION PHENOTYPE</scope>
</reference>
<reference evidence="15" key="8">
    <citation type="journal article" date="2011" name="Dev. Cell">
        <title>The sterile 20-like kinase Tao-1 controls tissue growth by regulating the Salvador-Warts-Hippo pathway.</title>
        <authorList>
            <person name="Poon C.L."/>
            <person name="Lin J.I."/>
            <person name="Zhang X."/>
            <person name="Harvey K.F."/>
        </authorList>
    </citation>
    <scope>FUNCTION</scope>
    <scope>CATALYTIC ACTIVITY</scope>
    <scope>COFACTOR</scope>
    <scope>AUTOPHOSPHORYLATION</scope>
    <scope>DISRUPTION PHENOTYPE</scope>
    <scope>MUTAGENESIS OF LYS-56</scope>
</reference>
<reference evidence="15" key="9">
    <citation type="journal article" date="2011" name="J. Neurosci.">
        <title>Drosophila tao controls mushroom body development and ethanol-stimulated behavior through par-1.</title>
        <authorList>
            <person name="King I."/>
            <person name="Tsai L.T."/>
            <person name="Pflanz R."/>
            <person name="Voigt A."/>
            <person name="Lee S."/>
            <person name="Jaeckle H."/>
            <person name="Lu B."/>
            <person name="Heberlein U."/>
        </authorList>
    </citation>
    <scope>FUNCTION</scope>
    <scope>DISRUPTION PHENOTYPE</scope>
</reference>
<reference evidence="15" key="10">
    <citation type="journal article" date="2012" name="J. Cell Biol.">
        <title>Tao controls epithelial morphogenesis by promoting Fasciclin 2 endocytosis.</title>
        <authorList>
            <person name="Gomez J.M."/>
            <person name="Wang Y."/>
            <person name="Riechmann V."/>
        </authorList>
    </citation>
    <scope>FUNCTION</scope>
    <scope>SUBCELLULAR LOCATION</scope>
    <scope>DISRUPTION PHENOTYPE</scope>
</reference>
<reference evidence="15" key="11">
    <citation type="journal article" date="2012" name="PLoS ONE">
        <title>JNK pathway activation is controlled by Tao/TAOK3 to modulate ethanol sensitivity.</title>
        <authorList>
            <person name="Kapfhamer D."/>
            <person name="King I."/>
            <person name="Zou M.E."/>
            <person name="Lim J.P."/>
            <person name="Heberlein U."/>
            <person name="Wolf F.W."/>
        </authorList>
    </citation>
    <scope>FUNCTION</scope>
</reference>
<reference evidence="15" key="12">
    <citation type="journal article" date="2014" name="J. Genet. Genomics">
        <title>The sterile 20-like kinase tao controls tissue homeostasis by regulating the hippo pathway in Drosophila adult midgut.</title>
        <authorList>
            <person name="Huang X."/>
            <person name="Shi L."/>
            <person name="Cao J."/>
            <person name="He F."/>
            <person name="Li R."/>
            <person name="Zhang Y."/>
            <person name="Miao S."/>
            <person name="Jin L."/>
            <person name="Qu J."/>
            <person name="Li Z."/>
            <person name="Lin X."/>
        </authorList>
    </citation>
    <scope>FUNCTION</scope>
    <scope>TISSUE SPECIFICITY</scope>
    <scope>DISRUPTION PHENOTYPE</scope>
</reference>
<reference evidence="15" key="13">
    <citation type="journal article" date="2015" name="Open Biol.">
        <title>Drosophila gene tao-1 encodes proteins with and without a Ste20 kinase domain that affect cytoskeletal architecture and cell migration differently.</title>
        <authorList>
            <person name="Pflanz R."/>
            <person name="Voigt A."/>
            <person name="Yakulov T."/>
            <person name="Jaeckle H."/>
        </authorList>
    </citation>
    <scope>FUNCTION (ISOFORMS A AND D)</scope>
    <scope>SUBCELLULAR LOCATION (ISOFORMS A AND D)</scope>
    <scope>DEVELOPMENTAL STAGE (ISOFORMS A AND D)</scope>
    <scope>DISRUPTION PHENOTYPE</scope>
    <scope>MUTAGENESIS OF LYS-56</scope>
</reference>
<reference evidence="15" key="14">
    <citation type="journal article" date="2016" name="Dev. Cell">
        <title>Drosophila Schip1 links Expanded and Tao-1 to regulate hippo signaling.</title>
        <authorList>
            <person name="Chung H.L."/>
            <person name="Augustine G.J."/>
            <person name="Choi K.W."/>
        </authorList>
    </citation>
    <scope>INTERACTION WITH SCHIP1</scope>
    <scope>SUBCELLULAR LOCATION</scope>
</reference>
<feature type="chain" id="PRO_0000436542" description="Serine/threonine-protein kinase Tao" evidence="15">
    <location>
        <begin position="1"/>
        <end position="1039"/>
    </location>
</feature>
<feature type="domain" description="Protein kinase" evidence="2">
    <location>
        <begin position="27"/>
        <end position="280"/>
    </location>
</feature>
<feature type="region of interest" description="Disordered" evidence="3">
    <location>
        <begin position="324"/>
        <end position="457"/>
    </location>
</feature>
<feature type="region of interest" description="Disordered" evidence="3">
    <location>
        <begin position="485"/>
        <end position="508"/>
    </location>
</feature>
<feature type="region of interest" description="Disordered" evidence="3">
    <location>
        <begin position="629"/>
        <end position="648"/>
    </location>
</feature>
<feature type="region of interest" description="Disordered" evidence="3">
    <location>
        <begin position="677"/>
        <end position="707"/>
    </location>
</feature>
<feature type="coiled-coil region" evidence="1">
    <location>
        <begin position="631"/>
        <end position="765"/>
    </location>
</feature>
<feature type="coiled-coil region" evidence="1">
    <location>
        <begin position="835"/>
        <end position="993"/>
    </location>
</feature>
<feature type="compositionally biased region" description="Polar residues" evidence="3">
    <location>
        <begin position="341"/>
        <end position="350"/>
    </location>
</feature>
<feature type="compositionally biased region" description="Low complexity" evidence="3">
    <location>
        <begin position="359"/>
        <end position="376"/>
    </location>
</feature>
<feature type="compositionally biased region" description="Basic residues" evidence="3">
    <location>
        <begin position="377"/>
        <end position="387"/>
    </location>
</feature>
<feature type="compositionally biased region" description="Low complexity" evidence="3">
    <location>
        <begin position="388"/>
        <end position="397"/>
    </location>
</feature>
<feature type="compositionally biased region" description="Low complexity" evidence="3">
    <location>
        <begin position="413"/>
        <end position="429"/>
    </location>
</feature>
<feature type="compositionally biased region" description="Polar residues" evidence="3">
    <location>
        <begin position="444"/>
        <end position="454"/>
    </location>
</feature>
<feature type="compositionally biased region" description="Gly residues" evidence="3">
    <location>
        <begin position="485"/>
        <end position="500"/>
    </location>
</feature>
<feature type="compositionally biased region" description="Basic and acidic residues" evidence="3">
    <location>
        <begin position="677"/>
        <end position="693"/>
    </location>
</feature>
<feature type="active site" description="Proton acceptor" evidence="2">
    <location>
        <position position="150"/>
    </location>
</feature>
<feature type="binding site" evidence="2">
    <location>
        <begin position="33"/>
        <end position="41"/>
    </location>
    <ligand>
        <name>ATP</name>
        <dbReference type="ChEBI" id="CHEBI:30616"/>
    </ligand>
</feature>
<feature type="binding site" evidence="2">
    <location>
        <position position="56"/>
    </location>
    <ligand>
        <name>ATP</name>
        <dbReference type="ChEBI" id="CHEBI:30616"/>
    </ligand>
</feature>
<feature type="splice variant" id="VSP_058386" description="In isoform A.">
    <original>MPSARPGSLKDPEIADLFNKHDPEKIFEDLREIGHGSFGAVYYARCNLTREIVAIKKMSYTGKQSQEKWQDILKEIRFLRQLNHPNTIEYKGCYLRESTAWLVMEYCVGSASDIIEVHKKPLHEDEIAAICLGVLSGLSYLHSLGRIHRDIKAGNILLTDNGVVKLADFGSAAIKCPANSFVGTPYWMAPEVILAMDEGQYDGKVDVWSLGITCIELAERKPPYFNMNAMSALYHIAQNESPTLPKNDWSDAFCSFVELCLKKMPAERPSSAKLLTHAYVTRPRSDTVLLELIARTKSAVRELDNLNYRKMKKILMVDTCETESAVGDTDDQQDDHAGGDSSKSNSITSEHSIHSVGVSAASSQSSSSNSIPAAAQNHHHIAAHHHQQAASAAVAAAMHHHHHPHQQPPPSWPSGQQGQPVPPGAVSRNSSRHRNRPPLPNIMHSMNNNVTPTNSASVVPAPAPAPVLPPPISVLPHLSAMGHVGGGGTGTGGSGGGSPASGGPLADRIQPVQPRYLTTPAAQAAVYAASSASSQQAISNAVNDHGPNNFATIRTTSIVTKQQKEHMQ</original>
    <variation>MFWPRFAPVEVMVELEFGSGF</variation>
    <location>
        <begin position="1"/>
        <end position="568"/>
    </location>
</feature>
<feature type="mutagenesis site" description="Induces the formation of microtubule-rich protrusions. Abolishes repression of Yki. Causes an isoform A-like cellular phenotype with development of filopodia-like structures." evidence="5 8 12">
    <original>K</original>
    <variation>A</variation>
    <location>
        <position position="56"/>
    </location>
</feature>
<keyword id="KW-0025">Alternative splicing</keyword>
<keyword id="KW-0067">ATP-binding</keyword>
<keyword id="KW-0966">Cell projection</keyword>
<keyword id="KW-0175">Coiled coil</keyword>
<keyword id="KW-0963">Cytoplasm</keyword>
<keyword id="KW-0206">Cytoskeleton</keyword>
<keyword id="KW-0418">Kinase</keyword>
<keyword id="KW-0460">Magnesium</keyword>
<keyword id="KW-0472">Membrane</keyword>
<keyword id="KW-0547">Nucleotide-binding</keyword>
<keyword id="KW-1185">Reference proteome</keyword>
<keyword id="KW-0723">Serine/threonine-protein kinase</keyword>
<keyword id="KW-0808">Transferase</keyword>
<comment type="function">
    <text evidence="4 5 6 7 8 9 10 11">Serine/threonine-protein kinase which regulates the Hippo/SWH (Sav/Wts/Hpo) signaling pathway, a signaling pathway that plays a pivotal role in organ size control and tumor suppression by restricting proliferation and promoting apoptosis. The core of this pathway is composed of a kinase cascade wherein Hippo (hpo), in complex with its regulatory protein Salvador (sav), phosphorylates and activates Warts (wts) in complex with its regulatory protein Mats, which in turn phosphorylates and inactivates the Yorkie (yki) oncoprotein (PubMed:22075147, PubMed:22075148). In imaginal cells, phosphorylates and activates hpo and leads to repression of yki (PubMed:22075147, PubMed:22075148). In the midgut, negatively regulates the proliferation of intestinal stem cells through the Hippo/SWH pathway (PubMed:25160975). Independent of the hippo/SWH pathway, regulates epithelial morphogenesis in follicle cells by promoting the endocytosis of Fas2 and reducing lateral adhesion between epithelial cells which, in turn, permits shrinking of the lateral membrane and initiates morphogenesis of the squamous epithelium (PubMed:23266957). Required for the development of both the mushroom body and the ellipsoid body in the brain and may act as a negative regulator of the par-1 kinase (PubMed:21248138). Negatively regulates the JNK pathway which increases sensitivity to ethanol exposure (PubMed:23227189). Plays a role in the control of cell shape by negatively regulating the growth of microtubule plus-ends as they contact the actin-rich cell cortex (PubMed:20647372). Required for the induction of apoptosis in pole cells by promoting expression of skl which enhances activity of the apoptosis activator hid (PubMed:17449640).</text>
</comment>
<comment type="function">
    <molecule>Isoform D</molecule>
    <text evidence="12">Induces in vitro expression of large, highly dynamic, microtubule-dependent lamellopodia-like cytoplasmic expansions which constantly probe the environment.</text>
</comment>
<comment type="function">
    <molecule>Isoform A</molecule>
    <text evidence="12">Induces in vitro expression of actin-dependent filopodia-like cytoplasmic protrusions which firmly attach to the substrate. Antagonizes the activity of isoform D.</text>
</comment>
<comment type="catalytic activity">
    <reaction evidence="7 8">
        <text>L-seryl-[protein] + ATP = O-phospho-L-seryl-[protein] + ADP + H(+)</text>
        <dbReference type="Rhea" id="RHEA:17989"/>
        <dbReference type="Rhea" id="RHEA-COMP:9863"/>
        <dbReference type="Rhea" id="RHEA-COMP:11604"/>
        <dbReference type="ChEBI" id="CHEBI:15378"/>
        <dbReference type="ChEBI" id="CHEBI:29999"/>
        <dbReference type="ChEBI" id="CHEBI:30616"/>
        <dbReference type="ChEBI" id="CHEBI:83421"/>
        <dbReference type="ChEBI" id="CHEBI:456216"/>
        <dbReference type="EC" id="2.7.11.1"/>
    </reaction>
</comment>
<comment type="catalytic activity">
    <reaction evidence="7 8">
        <text>L-threonyl-[protein] + ATP = O-phospho-L-threonyl-[protein] + ADP + H(+)</text>
        <dbReference type="Rhea" id="RHEA:46608"/>
        <dbReference type="Rhea" id="RHEA-COMP:11060"/>
        <dbReference type="Rhea" id="RHEA-COMP:11605"/>
        <dbReference type="ChEBI" id="CHEBI:15378"/>
        <dbReference type="ChEBI" id="CHEBI:30013"/>
        <dbReference type="ChEBI" id="CHEBI:30616"/>
        <dbReference type="ChEBI" id="CHEBI:61977"/>
        <dbReference type="ChEBI" id="CHEBI:456216"/>
        <dbReference type="EC" id="2.7.11.1"/>
    </reaction>
</comment>
<comment type="cofactor">
    <cofactor evidence="7 8">
        <name>Mg(2+)</name>
        <dbReference type="ChEBI" id="CHEBI:18420"/>
    </cofactor>
</comment>
<comment type="subunit">
    <text evidence="13">Interacts with Schip1; the interaction enhances Tao kinase activity.</text>
</comment>
<comment type="subcellular location">
    <subcellularLocation>
        <location evidence="5">Cytoplasm</location>
        <location evidence="5">Cytoskeleton</location>
    </subcellularLocation>
    <subcellularLocation>
        <location evidence="5">Cytoplasm</location>
        <location evidence="5">Cytoskeleton</location>
        <location evidence="5">Spindle</location>
    </subcellularLocation>
    <subcellularLocation>
        <location evidence="10 13">Cytoplasm</location>
    </subcellularLocation>
    <subcellularLocation>
        <location>Membrane</location>
        <topology evidence="10 13">Peripheral membrane protein</topology>
    </subcellularLocation>
    <text evidence="5 10">Localizes to a subset of microtubules in interphase and mitotic cells (PubMed:20647372). In follicle cells, accumulates in the basolateral cytoplasm and at the lateral membrane (PubMed:23266957).</text>
</comment>
<comment type="subcellular location">
    <molecule>Isoform D</molecule>
    <subcellularLocation>
        <location evidence="12">Cytoplasm</location>
    </subcellularLocation>
    <subcellularLocation>
        <location evidence="12">Perikaryon</location>
    </subcellularLocation>
    <text evidence="12">In non-neuronal cells, distributed throughout the cytoplasm and enriched at the leading edge of lamellipodia-like structures. In neurons, detected in the perikaryon.</text>
</comment>
<comment type="subcellular location">
    <molecule>Isoform A</molecule>
    <subcellularLocation>
        <location evidence="12">Cytoplasm</location>
        <location evidence="12">Cell cortex</location>
    </subcellularLocation>
    <subcellularLocation>
        <location evidence="12">Cell projection</location>
        <location evidence="12">Axon</location>
    </subcellularLocation>
    <text evidence="12">In non-neuronal cells, located predominantly at the cell periphery in the cortex. In neurons, enriched in the cell periphery including the axon.</text>
</comment>
<comment type="alternative products">
    <event type="alternative splicing"/>
    <isoform>
        <id>Q0KHQ5-1</id>
        <name evidence="20">D</name>
        <name evidence="20">E</name>
        <name evidence="20">F</name>
        <name evidence="14">Tao-L</name>
        <sequence type="displayed"/>
    </isoform>
    <isoform>
        <id>Q0KHQ5-2</id>
        <name evidence="20">A</name>
        <name evidence="20">G</name>
        <name evidence="14">Tao-S</name>
        <sequence type="described" ref="VSP_058386"/>
    </isoform>
</comment>
<comment type="tissue specificity">
    <text evidence="11">In the posterior midgut, expressed in almost all intestinal cell types including intestinal stem cells and enterocytes (at protein level). Maternally expressed, ubiquitously distributed in the egg and early embryo and enriched in the germ plasm at the posterior pole of the early embryo including the pole cells.</text>
</comment>
<comment type="developmental stage">
    <text evidence="12">Isoform A: Enriched in germ plasm but is degraded in pole cells immediately after pole cell formation. Isoform D: Enriched in germ plasm, partitions into pole cells and remains detectable in pole cells until they migrate through the midgut epithelium toward the overlying mesoderm.</text>
</comment>
<comment type="PTM">
    <text evidence="7 8">Autophosphorylated.</text>
</comment>
<comment type="disruption phenotype">
    <text evidence="6 7 8 10 11 12">Morphological defects in the follicular epithelium where cells in the anterior part of the epithelium stay cuboidal and fail to stretch (PubMed:23266957). RNAi-mediated knockdown in eye and wing imaginal disks results in tissue overgrowth (PubMed:22075147, PubMed:22075148). It also gives rise to transcriptional up-regulation of a number of targets of the Hippo/SWH pathway (PubMed:22075147). RNAi-mediated knockdown in wing imaginal disks results in strong elevation of yki activity (PubMed:22075148). RNAi-mediated knockdown in the adult posterior midgut results in an increased number of intestinal stem cells (PubMed:25160975). RNAi-mediated knockdown in the embryo results in disordered migration of primordial germ cells out of the gut epithelium, their dispersal within the embryo and embryonic death (PubMed:25589578).</text>
</comment>
<comment type="similarity">
    <text evidence="15">Belongs to the protein kinase superfamily. STE Ser/Thr protein kinase family. STE20 subfamily.</text>
</comment>
<protein>
    <recommendedName>
        <fullName evidence="15">Serine/threonine-protein kinase Tao</fullName>
        <ecNumber evidence="7 8">2.7.11.1</ecNumber>
    </recommendedName>
</protein>
<evidence type="ECO:0000255" key="1"/>
<evidence type="ECO:0000255" key="2">
    <source>
        <dbReference type="PROSITE-ProRule" id="PRU00159"/>
    </source>
</evidence>
<evidence type="ECO:0000256" key="3">
    <source>
        <dbReference type="SAM" id="MobiDB-lite"/>
    </source>
</evidence>
<evidence type="ECO:0000269" key="4">
    <source>
    </source>
</evidence>
<evidence type="ECO:0000269" key="5">
    <source>
    </source>
</evidence>
<evidence type="ECO:0000269" key="6">
    <source>
    </source>
</evidence>
<evidence type="ECO:0000269" key="7">
    <source>
    </source>
</evidence>
<evidence type="ECO:0000269" key="8">
    <source>
    </source>
</evidence>
<evidence type="ECO:0000269" key="9">
    <source>
    </source>
</evidence>
<evidence type="ECO:0000269" key="10">
    <source>
    </source>
</evidence>
<evidence type="ECO:0000269" key="11">
    <source>
    </source>
</evidence>
<evidence type="ECO:0000269" key="12">
    <source>
    </source>
</evidence>
<evidence type="ECO:0000269" key="13">
    <source>
    </source>
</evidence>
<evidence type="ECO:0000303" key="14">
    <source>
    </source>
</evidence>
<evidence type="ECO:0000305" key="15"/>
<evidence type="ECO:0000312" key="16">
    <source>
        <dbReference type="EMBL" id="AAL39614.1"/>
    </source>
</evidence>
<evidence type="ECO:0000312" key="17">
    <source>
        <dbReference type="EMBL" id="ACV53083.1"/>
    </source>
</evidence>
<evidence type="ECO:0000312" key="18">
    <source>
        <dbReference type="EMBL" id="BAF51959.1"/>
    </source>
</evidence>
<evidence type="ECO:0000312" key="19">
    <source>
        <dbReference type="EMBL" id="BAF51960.1"/>
    </source>
</evidence>
<evidence type="ECO:0000312" key="20">
    <source>
        <dbReference type="FlyBase" id="FBgn0031030"/>
    </source>
</evidence>
<evidence type="ECO:0000312" key="21">
    <source>
        <dbReference type="Proteomes" id="UP000000803"/>
    </source>
</evidence>
<proteinExistence type="evidence at protein level"/>
<name>TAO_DROME</name>
<gene>
    <name evidence="20" type="primary">Tao</name>
    <name evidence="20" type="synonym">Tao-1</name>
    <name evidence="20" type="ORF">CG14217</name>
</gene>
<dbReference type="EC" id="2.7.11.1" evidence="7 8"/>
<dbReference type="EMBL" id="AB277547">
    <property type="protein sequence ID" value="BAF51959.1"/>
    <property type="molecule type" value="mRNA"/>
</dbReference>
<dbReference type="EMBL" id="AB277548">
    <property type="protein sequence ID" value="BAF51960.1"/>
    <property type="molecule type" value="mRNA"/>
</dbReference>
<dbReference type="EMBL" id="AE014298">
    <property type="protein sequence ID" value="AAF48973.1"/>
    <property type="molecule type" value="Genomic_DNA"/>
</dbReference>
<dbReference type="EMBL" id="AE014298">
    <property type="protein sequence ID" value="AAN09504.1"/>
    <property type="molecule type" value="Genomic_DNA"/>
</dbReference>
<dbReference type="EMBL" id="AE014298">
    <property type="protein sequence ID" value="AAN09505.1"/>
    <property type="molecule type" value="Genomic_DNA"/>
</dbReference>
<dbReference type="EMBL" id="AE014298">
    <property type="protein sequence ID" value="ADV37754.1"/>
    <property type="molecule type" value="Genomic_DNA"/>
</dbReference>
<dbReference type="EMBL" id="AE014298">
    <property type="protein sequence ID" value="ADV37755.1"/>
    <property type="molecule type" value="Genomic_DNA"/>
</dbReference>
<dbReference type="EMBL" id="AY069469">
    <property type="protein sequence ID" value="AAL39614.1"/>
    <property type="molecule type" value="mRNA"/>
</dbReference>
<dbReference type="EMBL" id="BT099719">
    <property type="protein sequence ID" value="ACV53083.1"/>
    <property type="molecule type" value="mRNA"/>
</dbReference>
<dbReference type="RefSeq" id="NP_001188672.1">
    <molecule id="Q0KHQ5-1"/>
    <property type="nucleotide sequence ID" value="NM_001201743.3"/>
</dbReference>
<dbReference type="RefSeq" id="NP_001188673.1">
    <molecule id="Q0KHQ5-2"/>
    <property type="nucleotide sequence ID" value="NM_001201744.2"/>
</dbReference>
<dbReference type="RefSeq" id="NP_608319.1">
    <molecule id="Q0KHQ5-2"/>
    <property type="nucleotide sequence ID" value="NM_134475.4"/>
</dbReference>
<dbReference type="RefSeq" id="NP_728267.1">
    <molecule id="Q0KHQ5-1"/>
    <property type="nucleotide sequence ID" value="NM_167665.2"/>
</dbReference>
<dbReference type="RefSeq" id="NP_728268.1">
    <molecule id="Q0KHQ5-1"/>
    <property type="nucleotide sequence ID" value="NM_167666.3"/>
</dbReference>
<dbReference type="SMR" id="Q0KHQ5"/>
<dbReference type="FunCoup" id="Q0KHQ5">
    <property type="interactions" value="557"/>
</dbReference>
<dbReference type="IntAct" id="Q0KHQ5">
    <property type="interactions" value="11"/>
</dbReference>
<dbReference type="STRING" id="7227.FBpp0292968"/>
<dbReference type="PaxDb" id="7227-FBpp0292968"/>
<dbReference type="DNASU" id="32948"/>
<dbReference type="EnsemblMetazoa" id="FBtr0074771">
    <molecule id="Q0KHQ5-1"/>
    <property type="protein sequence ID" value="FBpp0074540"/>
    <property type="gene ID" value="FBgn0031030"/>
</dbReference>
<dbReference type="EnsemblMetazoa" id="FBtr0074772">
    <molecule id="Q0KHQ5-1"/>
    <property type="protein sequence ID" value="FBpp0074541"/>
    <property type="gene ID" value="FBgn0031030"/>
</dbReference>
<dbReference type="EnsemblMetazoa" id="FBtr0074774">
    <molecule id="Q0KHQ5-2"/>
    <property type="protein sequence ID" value="FBpp0074543"/>
    <property type="gene ID" value="FBgn0031030"/>
</dbReference>
<dbReference type="EnsemblMetazoa" id="FBtr0303999">
    <molecule id="Q0KHQ5-1"/>
    <property type="protein sequence ID" value="FBpp0292968"/>
    <property type="gene ID" value="FBgn0031030"/>
</dbReference>
<dbReference type="EnsemblMetazoa" id="FBtr0304000">
    <molecule id="Q0KHQ5-2"/>
    <property type="protein sequence ID" value="FBpp0292969"/>
    <property type="gene ID" value="FBgn0031030"/>
</dbReference>
<dbReference type="GeneID" id="32948"/>
<dbReference type="KEGG" id="dme:Dmel_CG14217"/>
<dbReference type="UCSC" id="CG14217-RA">
    <property type="organism name" value="d. melanogaster"/>
</dbReference>
<dbReference type="UCSC" id="CG14217-RD">
    <molecule id="Q0KHQ5-1"/>
    <property type="organism name" value="d. melanogaster"/>
</dbReference>
<dbReference type="AGR" id="FB:FBgn0031030"/>
<dbReference type="CTD" id="32948"/>
<dbReference type="FlyBase" id="FBgn0031030">
    <property type="gene designation" value="Tao"/>
</dbReference>
<dbReference type="VEuPathDB" id="VectorBase:FBgn0031030"/>
<dbReference type="eggNOG" id="KOG0577">
    <property type="taxonomic scope" value="Eukaryota"/>
</dbReference>
<dbReference type="GeneTree" id="ENSGT00940000168060"/>
<dbReference type="InParanoid" id="Q0KHQ5"/>
<dbReference type="OMA" id="QKKEYKH"/>
<dbReference type="OrthoDB" id="10016527at2759"/>
<dbReference type="PhylomeDB" id="Q0KHQ5"/>
<dbReference type="SignaLink" id="Q0KHQ5"/>
<dbReference type="BioGRID-ORCS" id="32948">
    <property type="hits" value="0 hits in 3 CRISPR screens"/>
</dbReference>
<dbReference type="ChiTaRS" id="Tao">
    <property type="organism name" value="fly"/>
</dbReference>
<dbReference type="GenomeRNAi" id="32948"/>
<dbReference type="PRO" id="PR:Q0KHQ5"/>
<dbReference type="Proteomes" id="UP000000803">
    <property type="component" value="Chromosome X"/>
</dbReference>
<dbReference type="Bgee" id="FBgn0031030">
    <property type="expression patterns" value="Expressed in lamina monopolar neuron L1 (Drosophila) in insect head and 280 other cell types or tissues"/>
</dbReference>
<dbReference type="ExpressionAtlas" id="Q0KHQ5">
    <property type="expression patterns" value="baseline and differential"/>
</dbReference>
<dbReference type="GO" id="GO:0030424">
    <property type="term" value="C:axon"/>
    <property type="evidence" value="ECO:0000314"/>
    <property type="project" value="UniProtKB"/>
</dbReference>
<dbReference type="GO" id="GO:0045178">
    <property type="term" value="C:basal part of cell"/>
    <property type="evidence" value="ECO:0000314"/>
    <property type="project" value="FlyBase"/>
</dbReference>
<dbReference type="GO" id="GO:0005938">
    <property type="term" value="C:cell cortex"/>
    <property type="evidence" value="ECO:0000314"/>
    <property type="project" value="UniProtKB"/>
</dbReference>
<dbReference type="GO" id="GO:0005737">
    <property type="term" value="C:cytoplasm"/>
    <property type="evidence" value="ECO:0000314"/>
    <property type="project" value="UniProtKB"/>
</dbReference>
<dbReference type="GO" id="GO:0016020">
    <property type="term" value="C:membrane"/>
    <property type="evidence" value="ECO:0000314"/>
    <property type="project" value="UniProtKB"/>
</dbReference>
<dbReference type="GO" id="GO:0005874">
    <property type="term" value="C:microtubule"/>
    <property type="evidence" value="ECO:0000314"/>
    <property type="project" value="UniProtKB"/>
</dbReference>
<dbReference type="GO" id="GO:0043204">
    <property type="term" value="C:perikaryon"/>
    <property type="evidence" value="ECO:0000314"/>
    <property type="project" value="UniProtKB"/>
</dbReference>
<dbReference type="GO" id="GO:0005886">
    <property type="term" value="C:plasma membrane"/>
    <property type="evidence" value="ECO:0000314"/>
    <property type="project" value="FlyBase"/>
</dbReference>
<dbReference type="GO" id="GO:0005819">
    <property type="term" value="C:spindle"/>
    <property type="evidence" value="ECO:0000314"/>
    <property type="project" value="UniProtKB"/>
</dbReference>
<dbReference type="GO" id="GO:0005524">
    <property type="term" value="F:ATP binding"/>
    <property type="evidence" value="ECO:0007669"/>
    <property type="project" value="UniProtKB-KW"/>
</dbReference>
<dbReference type="GO" id="GO:0004672">
    <property type="term" value="F:protein kinase activity"/>
    <property type="evidence" value="ECO:0000314"/>
    <property type="project" value="UniProtKB"/>
</dbReference>
<dbReference type="GO" id="GO:0106310">
    <property type="term" value="F:protein serine kinase activity"/>
    <property type="evidence" value="ECO:0007669"/>
    <property type="project" value="RHEA"/>
</dbReference>
<dbReference type="GO" id="GO:0004674">
    <property type="term" value="F:protein serine/threonine kinase activity"/>
    <property type="evidence" value="ECO:0000314"/>
    <property type="project" value="FlyBase"/>
</dbReference>
<dbReference type="GO" id="GO:0006915">
    <property type="term" value="P:apoptotic process"/>
    <property type="evidence" value="ECO:0000315"/>
    <property type="project" value="FlyBase"/>
</dbReference>
<dbReference type="GO" id="GO:0048036">
    <property type="term" value="P:central complex development"/>
    <property type="evidence" value="ECO:0000315"/>
    <property type="project" value="FlyBase"/>
</dbReference>
<dbReference type="GO" id="GO:0030707">
    <property type="term" value="P:follicle cell of egg chamber development"/>
    <property type="evidence" value="ECO:0000315"/>
    <property type="project" value="FlyBase"/>
</dbReference>
<dbReference type="GO" id="GO:0036335">
    <property type="term" value="P:intestinal stem cell homeostasis"/>
    <property type="evidence" value="ECO:0000315"/>
    <property type="project" value="FlyBase"/>
</dbReference>
<dbReference type="GO" id="GO:0016319">
    <property type="term" value="P:mushroom body development"/>
    <property type="evidence" value="ECO:0000315"/>
    <property type="project" value="FlyBase"/>
</dbReference>
<dbReference type="GO" id="GO:0030514">
    <property type="term" value="P:negative regulation of BMP signaling pathway"/>
    <property type="evidence" value="ECO:0000315"/>
    <property type="project" value="FlyBase"/>
</dbReference>
<dbReference type="GO" id="GO:0046621">
    <property type="term" value="P:negative regulation of organ growth"/>
    <property type="evidence" value="ECO:0000315"/>
    <property type="project" value="FlyBase"/>
</dbReference>
<dbReference type="GO" id="GO:0045886">
    <property type="term" value="P:negative regulation of synaptic assembly at neuromuscular junction"/>
    <property type="evidence" value="ECO:0000315"/>
    <property type="project" value="FlyBase"/>
</dbReference>
<dbReference type="GO" id="GO:0045807">
    <property type="term" value="P:positive regulation of endocytosis"/>
    <property type="evidence" value="ECO:0000315"/>
    <property type="project" value="FlyBase"/>
</dbReference>
<dbReference type="GO" id="GO:0035332">
    <property type="term" value="P:positive regulation of hippo signaling"/>
    <property type="evidence" value="ECO:0000315"/>
    <property type="project" value="FlyBase"/>
</dbReference>
<dbReference type="GO" id="GO:0046330">
    <property type="term" value="P:positive regulation of JNK cascade"/>
    <property type="evidence" value="ECO:0000318"/>
    <property type="project" value="GO_Central"/>
</dbReference>
<dbReference type="GO" id="GO:0032874">
    <property type="term" value="P:positive regulation of stress-activated MAPK cascade"/>
    <property type="evidence" value="ECO:0000318"/>
    <property type="project" value="GO_Central"/>
</dbReference>
<dbReference type="GO" id="GO:0007460">
    <property type="term" value="P:R8 cell fate commitment"/>
    <property type="evidence" value="ECO:0000315"/>
    <property type="project" value="FlyBase"/>
</dbReference>
<dbReference type="GO" id="GO:0042220">
    <property type="term" value="P:response to cocaine"/>
    <property type="evidence" value="ECO:0000315"/>
    <property type="project" value="FlyBase"/>
</dbReference>
<dbReference type="GO" id="GO:0045471">
    <property type="term" value="P:response to ethanol"/>
    <property type="evidence" value="ECO:0000315"/>
    <property type="project" value="FlyBase"/>
</dbReference>
<dbReference type="GO" id="GO:0035094">
    <property type="term" value="P:response to nicotine"/>
    <property type="evidence" value="ECO:0000315"/>
    <property type="project" value="FlyBase"/>
</dbReference>
<dbReference type="GO" id="GO:0001894">
    <property type="term" value="P:tissue homeostasis"/>
    <property type="evidence" value="ECO:0000315"/>
    <property type="project" value="FlyBase"/>
</dbReference>
<dbReference type="CDD" id="cd06607">
    <property type="entry name" value="STKc_TAO"/>
    <property type="match status" value="1"/>
</dbReference>
<dbReference type="FunFam" id="1.10.510.10:FF:000030">
    <property type="entry name" value="Serine/threonine-protein kinase TAO2, putative"/>
    <property type="match status" value="1"/>
</dbReference>
<dbReference type="FunFam" id="3.30.200.20:FF:000029">
    <property type="entry name" value="Serine/threonine-protein kinase TAO2, putative"/>
    <property type="match status" value="1"/>
</dbReference>
<dbReference type="Gene3D" id="3.30.200.20">
    <property type="entry name" value="Phosphorylase Kinase, domain 1"/>
    <property type="match status" value="1"/>
</dbReference>
<dbReference type="Gene3D" id="1.10.510.10">
    <property type="entry name" value="Transferase(Phosphotransferase) domain 1"/>
    <property type="match status" value="1"/>
</dbReference>
<dbReference type="InterPro" id="IPR011009">
    <property type="entry name" value="Kinase-like_dom_sf"/>
</dbReference>
<dbReference type="InterPro" id="IPR000719">
    <property type="entry name" value="Prot_kinase_dom"/>
</dbReference>
<dbReference type="InterPro" id="IPR017441">
    <property type="entry name" value="Protein_kinase_ATP_BS"/>
</dbReference>
<dbReference type="InterPro" id="IPR051234">
    <property type="entry name" value="TAO_STE20_kinase"/>
</dbReference>
<dbReference type="PANTHER" id="PTHR47167">
    <property type="entry name" value="SERINE/THREONINE-PROTEIN KINASE TAO1-LIKE PROTEIN"/>
    <property type="match status" value="1"/>
</dbReference>
<dbReference type="PANTHER" id="PTHR47167:SF4">
    <property type="entry name" value="SERINE_THREONINE-PROTEIN KINASE TAO"/>
    <property type="match status" value="1"/>
</dbReference>
<dbReference type="Pfam" id="PF00069">
    <property type="entry name" value="Pkinase"/>
    <property type="match status" value="1"/>
</dbReference>
<dbReference type="SMART" id="SM00220">
    <property type="entry name" value="S_TKc"/>
    <property type="match status" value="1"/>
</dbReference>
<dbReference type="SUPFAM" id="SSF56112">
    <property type="entry name" value="Protein kinase-like (PK-like)"/>
    <property type="match status" value="1"/>
</dbReference>
<dbReference type="PROSITE" id="PS00107">
    <property type="entry name" value="PROTEIN_KINASE_ATP"/>
    <property type="match status" value="1"/>
</dbReference>
<dbReference type="PROSITE" id="PS50011">
    <property type="entry name" value="PROTEIN_KINASE_DOM"/>
    <property type="match status" value="1"/>
</dbReference>